<organism>
    <name type="scientific">Enterobacter sp. (strain 638)</name>
    <dbReference type="NCBI Taxonomy" id="399742"/>
    <lineage>
        <taxon>Bacteria</taxon>
        <taxon>Pseudomonadati</taxon>
        <taxon>Pseudomonadota</taxon>
        <taxon>Gammaproteobacteria</taxon>
        <taxon>Enterobacterales</taxon>
        <taxon>Enterobacteriaceae</taxon>
        <taxon>Enterobacter</taxon>
    </lineage>
</organism>
<evidence type="ECO:0000255" key="1">
    <source>
        <dbReference type="HAMAP-Rule" id="MF_01014"/>
    </source>
</evidence>
<proteinExistence type="inferred from homology"/>
<comment type="catalytic activity">
    <reaction evidence="1">
        <text>1-(5-phospho-beta-D-ribosyl)-5-[(5-phospho-beta-D-ribosylamino)methylideneamino]imidazole-4-carboxamide = 5-[(5-phospho-1-deoxy-D-ribulos-1-ylimino)methylamino]-1-(5-phospho-beta-D-ribosyl)imidazole-4-carboxamide</text>
        <dbReference type="Rhea" id="RHEA:15469"/>
        <dbReference type="ChEBI" id="CHEBI:58435"/>
        <dbReference type="ChEBI" id="CHEBI:58525"/>
        <dbReference type="EC" id="5.3.1.16"/>
    </reaction>
</comment>
<comment type="pathway">
    <text evidence="1">Amino-acid biosynthesis; L-histidine biosynthesis; L-histidine from 5-phospho-alpha-D-ribose 1-diphosphate: step 4/9.</text>
</comment>
<comment type="subcellular location">
    <subcellularLocation>
        <location evidence="1">Cytoplasm</location>
    </subcellularLocation>
</comment>
<comment type="similarity">
    <text evidence="1">Belongs to the HisA/HisF family.</text>
</comment>
<name>HIS4_ENT38</name>
<accession>A4WC73</accession>
<protein>
    <recommendedName>
        <fullName evidence="1">1-(5-phosphoribosyl)-5-[(5-phosphoribosylamino)methylideneamino] imidazole-4-carboxamide isomerase</fullName>
        <ecNumber evidence="1">5.3.1.16</ecNumber>
    </recommendedName>
    <alternativeName>
        <fullName evidence="1">Phosphoribosylformimino-5-aminoimidazole carboxamide ribotide isomerase</fullName>
    </alternativeName>
</protein>
<sequence>MIIPALDLIDGTVVRLHQGDYGQQRDYGNDPLPRLQDYAAQGAEVLHLVDLTGAKDPAKRQITLLKSLVSGVDVPVQVGGGVRTEEDVAALLEAGVARVVVGSTAVKDPEMVKDWFRRFGADALVLALDVRIDDQGNKQVAVSGWQENSGVTLEELVEIYLPVGLKHVLCTDISRDGTLAGSNVSLYEEVCARYPQVAFQSSGGIGDLADIAALRGTGVRGVIVGRALLEEKFTVTEAIQCWQNG</sequence>
<feature type="chain" id="PRO_1000063206" description="1-(5-phosphoribosyl)-5-[(5-phosphoribosylamino)methylideneamino] imidazole-4-carboxamide isomerase">
    <location>
        <begin position="1"/>
        <end position="245"/>
    </location>
</feature>
<feature type="active site" description="Proton acceptor" evidence="1">
    <location>
        <position position="7"/>
    </location>
</feature>
<feature type="active site" description="Proton donor" evidence="1">
    <location>
        <position position="129"/>
    </location>
</feature>
<dbReference type="EC" id="5.3.1.16" evidence="1"/>
<dbReference type="EMBL" id="CP000653">
    <property type="protein sequence ID" value="ABP61303.1"/>
    <property type="molecule type" value="Genomic_DNA"/>
</dbReference>
<dbReference type="RefSeq" id="WP_015959636.1">
    <property type="nucleotide sequence ID" value="NC_009436.1"/>
</dbReference>
<dbReference type="SMR" id="A4WC73"/>
<dbReference type="STRING" id="399742.Ent638_2636"/>
<dbReference type="KEGG" id="ent:Ent638_2636"/>
<dbReference type="eggNOG" id="COG0106">
    <property type="taxonomic scope" value="Bacteria"/>
</dbReference>
<dbReference type="HOGENOM" id="CLU_048577_1_2_6"/>
<dbReference type="OrthoDB" id="9807749at2"/>
<dbReference type="UniPathway" id="UPA00031">
    <property type="reaction ID" value="UER00009"/>
</dbReference>
<dbReference type="Proteomes" id="UP000000230">
    <property type="component" value="Chromosome"/>
</dbReference>
<dbReference type="GO" id="GO:0005737">
    <property type="term" value="C:cytoplasm"/>
    <property type="evidence" value="ECO:0007669"/>
    <property type="project" value="UniProtKB-SubCell"/>
</dbReference>
<dbReference type="GO" id="GO:0003949">
    <property type="term" value="F:1-(5-phosphoribosyl)-5-[(5-phosphoribosylamino)methylideneamino]imidazole-4-carboxamide isomerase activity"/>
    <property type="evidence" value="ECO:0007669"/>
    <property type="project" value="UniProtKB-UniRule"/>
</dbReference>
<dbReference type="GO" id="GO:0000105">
    <property type="term" value="P:L-histidine biosynthetic process"/>
    <property type="evidence" value="ECO:0007669"/>
    <property type="project" value="UniProtKB-UniRule"/>
</dbReference>
<dbReference type="GO" id="GO:0000162">
    <property type="term" value="P:L-tryptophan biosynthetic process"/>
    <property type="evidence" value="ECO:0007669"/>
    <property type="project" value="TreeGrafter"/>
</dbReference>
<dbReference type="CDD" id="cd04732">
    <property type="entry name" value="HisA"/>
    <property type="match status" value="1"/>
</dbReference>
<dbReference type="FunFam" id="3.20.20.70:FF:000009">
    <property type="entry name" value="1-(5-phosphoribosyl)-5-[(5-phosphoribosylamino)methylideneamino] imidazole-4-carboxamide isomerase"/>
    <property type="match status" value="1"/>
</dbReference>
<dbReference type="Gene3D" id="3.20.20.70">
    <property type="entry name" value="Aldolase class I"/>
    <property type="match status" value="1"/>
</dbReference>
<dbReference type="HAMAP" id="MF_01014">
    <property type="entry name" value="HisA"/>
    <property type="match status" value="1"/>
</dbReference>
<dbReference type="InterPro" id="IPR013785">
    <property type="entry name" value="Aldolase_TIM"/>
</dbReference>
<dbReference type="InterPro" id="IPR006062">
    <property type="entry name" value="His_biosynth"/>
</dbReference>
<dbReference type="InterPro" id="IPR006063">
    <property type="entry name" value="HisA_bact_arch"/>
</dbReference>
<dbReference type="InterPro" id="IPR044524">
    <property type="entry name" value="Isoase_HisA-like"/>
</dbReference>
<dbReference type="InterPro" id="IPR023016">
    <property type="entry name" value="Isoase_HisA-like_bact"/>
</dbReference>
<dbReference type="InterPro" id="IPR011060">
    <property type="entry name" value="RibuloseP-bd_barrel"/>
</dbReference>
<dbReference type="NCBIfam" id="TIGR00007">
    <property type="entry name" value="1-(5-phosphoribosyl)-5-[(5-phosphoribosylamino)methylideneamino]imidazole-4-carboxamide isomerase"/>
    <property type="match status" value="1"/>
</dbReference>
<dbReference type="PANTHER" id="PTHR43090">
    <property type="entry name" value="1-(5-PHOSPHORIBOSYL)-5-[(5-PHOSPHORIBOSYLAMINO)METHYLIDENEAMINO] IMIDAZOLE-4-CARBOXAMIDE ISOMERASE"/>
    <property type="match status" value="1"/>
</dbReference>
<dbReference type="PANTHER" id="PTHR43090:SF2">
    <property type="entry name" value="1-(5-PHOSPHORIBOSYL)-5-[(5-PHOSPHORIBOSYLAMINO)METHYLIDENEAMINO] IMIDAZOLE-4-CARBOXAMIDE ISOMERASE"/>
    <property type="match status" value="1"/>
</dbReference>
<dbReference type="Pfam" id="PF00977">
    <property type="entry name" value="His_biosynth"/>
    <property type="match status" value="1"/>
</dbReference>
<dbReference type="SUPFAM" id="SSF51366">
    <property type="entry name" value="Ribulose-phoshate binding barrel"/>
    <property type="match status" value="1"/>
</dbReference>
<keyword id="KW-0028">Amino-acid biosynthesis</keyword>
<keyword id="KW-0963">Cytoplasm</keyword>
<keyword id="KW-0368">Histidine biosynthesis</keyword>
<keyword id="KW-0413">Isomerase</keyword>
<reference key="1">
    <citation type="journal article" date="2010" name="PLoS Genet.">
        <title>Genome sequence of the plant growth promoting endophytic bacterium Enterobacter sp. 638.</title>
        <authorList>
            <person name="Taghavi S."/>
            <person name="van der Lelie D."/>
            <person name="Hoffman A."/>
            <person name="Zhang Y.B."/>
            <person name="Walla M.D."/>
            <person name="Vangronsveld J."/>
            <person name="Newman L."/>
            <person name="Monchy S."/>
        </authorList>
    </citation>
    <scope>NUCLEOTIDE SEQUENCE [LARGE SCALE GENOMIC DNA]</scope>
    <source>
        <strain>638</strain>
    </source>
</reference>
<gene>
    <name evidence="1" type="primary">hisA</name>
    <name type="ordered locus">Ent638_2636</name>
</gene>